<proteinExistence type="inferred from homology"/>
<organism>
    <name type="scientific">Buchnera aphidicola subsp. Schizaphis graminum (strain Sg)</name>
    <dbReference type="NCBI Taxonomy" id="198804"/>
    <lineage>
        <taxon>Bacteria</taxon>
        <taxon>Pseudomonadati</taxon>
        <taxon>Pseudomonadota</taxon>
        <taxon>Gammaproteobacteria</taxon>
        <taxon>Enterobacterales</taxon>
        <taxon>Erwiniaceae</taxon>
        <taxon>Buchnera</taxon>
    </lineage>
</organism>
<gene>
    <name evidence="1" type="primary">tmaR</name>
    <name type="ordered locus">BUsg_538</name>
</gene>
<feature type="chain" id="PRO_0000072756" description="Pole-localizer protein TmaR">
    <location>
        <begin position="1"/>
        <end position="101"/>
    </location>
</feature>
<feature type="coiled-coil region" evidence="1">
    <location>
        <begin position="68"/>
        <end position="95"/>
    </location>
</feature>
<accession>Q8K922</accession>
<evidence type="ECO:0000255" key="1">
    <source>
        <dbReference type="HAMAP-Rule" id="MF_00683"/>
    </source>
</evidence>
<protein>
    <recommendedName>
        <fullName evidence="1">Pole-localizer protein TmaR</fullName>
    </recommendedName>
</protein>
<sequence>MNTKKTFKSALEFVHKFRRKNKIKREISDIEKKIRDNQKRILLLDNLNQYITPDMNYEEIKKIIFMMKNDYEDRIDDYIVKNAELSKEKRSLSKELKLIVD</sequence>
<comment type="function">
    <text evidence="1">Pole-localizer protein involved in the regulation of several cellular processes.</text>
</comment>
<comment type="subcellular location">
    <subcellularLocation>
        <location evidence="1">Cytoplasm</location>
    </subcellularLocation>
</comment>
<comment type="similarity">
    <text evidence="1">Belongs to the pole-localizer TmaR family.</text>
</comment>
<reference key="1">
    <citation type="journal article" date="2002" name="Science">
        <title>50 million years of genomic stasis in endosymbiotic bacteria.</title>
        <authorList>
            <person name="Tamas I."/>
            <person name="Klasson L."/>
            <person name="Canbaeck B."/>
            <person name="Naeslund A.K."/>
            <person name="Eriksson A.-S."/>
            <person name="Wernegreen J.J."/>
            <person name="Sandstroem J.P."/>
            <person name="Moran N.A."/>
            <person name="Andersson S.G.E."/>
        </authorList>
    </citation>
    <scope>NUCLEOTIDE SEQUENCE [LARGE SCALE GENOMIC DNA]</scope>
    <source>
        <strain>Sg</strain>
    </source>
</reference>
<keyword id="KW-0175">Coiled coil</keyword>
<keyword id="KW-0963">Cytoplasm</keyword>
<dbReference type="EMBL" id="AE013218">
    <property type="protein sequence ID" value="AAM68079.1"/>
    <property type="molecule type" value="Genomic_DNA"/>
</dbReference>
<dbReference type="SMR" id="Q8K922"/>
<dbReference type="STRING" id="198804.BUsg_538"/>
<dbReference type="KEGG" id="bas:BUsg_538"/>
<dbReference type="eggNOG" id="COG2926">
    <property type="taxonomic scope" value="Bacteria"/>
</dbReference>
<dbReference type="HOGENOM" id="CLU_153146_0_0_6"/>
<dbReference type="Proteomes" id="UP000000416">
    <property type="component" value="Chromosome"/>
</dbReference>
<dbReference type="GO" id="GO:0005829">
    <property type="term" value="C:cytosol"/>
    <property type="evidence" value="ECO:0007669"/>
    <property type="project" value="TreeGrafter"/>
</dbReference>
<dbReference type="HAMAP" id="MF_00683">
    <property type="entry name" value="Pole_loc_TmaR"/>
    <property type="match status" value="1"/>
</dbReference>
<dbReference type="InterPro" id="IPR007458">
    <property type="entry name" value="DUF496"/>
</dbReference>
<dbReference type="NCBIfam" id="NF003844">
    <property type="entry name" value="PRK05423.1"/>
    <property type="match status" value="1"/>
</dbReference>
<dbReference type="PANTHER" id="PTHR39591">
    <property type="entry name" value="UPF0265 PROTEIN YEEX"/>
    <property type="match status" value="1"/>
</dbReference>
<dbReference type="PANTHER" id="PTHR39591:SF1">
    <property type="entry name" value="UPF0265 PROTEIN YEEX"/>
    <property type="match status" value="1"/>
</dbReference>
<dbReference type="Pfam" id="PF04363">
    <property type="entry name" value="DUF496"/>
    <property type="match status" value="1"/>
</dbReference>
<dbReference type="PIRSF" id="PIRSF028773">
    <property type="entry name" value="UCP028773"/>
    <property type="match status" value="1"/>
</dbReference>
<name>TMAR_BUCAP</name>